<feature type="chain" id="PRO_0000197188" description="N-acetylglucosaminyltransferase">
    <location>
        <begin position="1"/>
        <end position="424"/>
    </location>
</feature>
<feature type="sequence conflict" description="In Ref. 3; AAB47353." evidence="1" ref="3">
    <original>N</original>
    <variation>T</variation>
    <location>
        <position position="2"/>
    </location>
</feature>
<feature type="sequence conflict" description="In Ref. 1; CAA37131 and 3; AAB47353." evidence="1" ref="1 3">
    <original>S</original>
    <variation>T</variation>
    <location>
        <position position="6"/>
    </location>
</feature>
<feature type="sequence conflict" description="In Ref. 1; CAA37131." evidence="1" ref="1">
    <original>P</original>
    <variation>A</variation>
    <location>
        <position position="36"/>
    </location>
</feature>
<feature type="sequence conflict" description="In Ref. 1; CAA37131." evidence="1" ref="1">
    <original>PS</original>
    <variation>AG</variation>
    <location>
        <begin position="43"/>
        <end position="44"/>
    </location>
</feature>
<feature type="sequence conflict" description="In Ref. 1; CAA37131." evidence="1" ref="1">
    <original>C</original>
    <variation>S</variation>
    <location>
        <position position="57"/>
    </location>
</feature>
<feature type="sequence conflict" description="In Ref. 1; CAA37131." evidence="1" ref="1">
    <original>D</original>
    <variation>E</variation>
    <location>
        <position position="76"/>
    </location>
</feature>
<feature type="sequence conflict" description="In Ref. 1; CAA37131." evidence="1" ref="1">
    <original>H</original>
    <variation>Q</variation>
    <location>
        <position position="100"/>
    </location>
</feature>
<feature type="sequence conflict" description="In Ref. 1; CAA37131." evidence="1" ref="1">
    <original>AG</original>
    <variation>GH</variation>
    <location>
        <begin position="104"/>
        <end position="105"/>
    </location>
</feature>
<feature type="sequence conflict" description="In Ref. 1; CAA37131." evidence="1" ref="1">
    <original>V</original>
    <variation>I</variation>
    <location>
        <position position="112"/>
    </location>
</feature>
<feature type="sequence conflict" description="In Ref. 1; CAA37131." evidence="1" ref="1">
    <original>I</original>
    <variation>V</variation>
    <location>
        <position position="128"/>
    </location>
</feature>
<feature type="sequence conflict" description="In Ref. 1; CAA37131." evidence="1" ref="1">
    <original>I</original>
    <variation>V</variation>
    <location>
        <position position="150"/>
    </location>
</feature>
<feature type="sequence conflict" description="In Ref. 1; CAA37131." evidence="1" ref="1">
    <original>V</original>
    <variation>I</variation>
    <location>
        <position position="162"/>
    </location>
</feature>
<feature type="sequence conflict" description="In Ref. 1; CAA37131." evidence="1" ref="1">
    <original>VSL</original>
    <variation>LSV</variation>
    <location>
        <begin position="220"/>
        <end position="222"/>
    </location>
</feature>
<feature type="sequence conflict" description="In Ref. 1; CAA37131." evidence="1" ref="1">
    <original>NSM</original>
    <variation>DRI</variation>
    <location>
        <begin position="269"/>
        <end position="271"/>
    </location>
</feature>
<feature type="sequence conflict" description="In Ref. 1; CAA37131." evidence="1" ref="1">
    <original>AFQLL</original>
    <variation>SLHLS</variation>
    <location>
        <begin position="292"/>
        <end position="296"/>
    </location>
</feature>
<feature type="sequence conflict" description="In Ref. 1; CAA37131." evidence="1" ref="1">
    <original>I</original>
    <variation>L</variation>
    <location>
        <position position="312"/>
    </location>
</feature>
<feature type="sequence conflict" description="In Ref. 1; CAA37131." evidence="1" ref="1">
    <original>I</original>
    <variation>V</variation>
    <location>
        <position position="321"/>
    </location>
</feature>
<feature type="sequence conflict" description="In Ref. 1; CAA37131." evidence="1" ref="1">
    <original>MI</original>
    <variation>TL</variation>
    <location>
        <begin position="341"/>
        <end position="342"/>
    </location>
</feature>
<feature type="sequence conflict" description="In Ref. 1; CAA37131." evidence="1" ref="1">
    <original>F</original>
    <variation>S</variation>
    <location>
        <position position="374"/>
    </location>
</feature>
<feature type="sequence conflict" description="In Ref. 1." evidence="1" ref="1">
    <original>ANVQDTGDALPKPN</original>
    <variation>TKVARHRARFQKPT</variation>
    <location>
        <begin position="399"/>
        <end position="412"/>
    </location>
</feature>
<feature type="sequence conflict" description="In Ref. 1; CAA37131." evidence="1" ref="1">
    <original>DAA</original>
    <variation>EAT</variation>
    <location>
        <begin position="417"/>
        <end position="419"/>
    </location>
</feature>
<evidence type="ECO:0000305" key="1"/>
<protein>
    <recommendedName>
        <fullName>N-acetylglucosaminyltransferase</fullName>
        <ecNumber>2.4.1.-</ecNumber>
    </recommendedName>
    <alternativeName>
        <fullName>Nodulation protein C</fullName>
    </alternativeName>
</protein>
<organism>
    <name type="scientific">Mesorhizobium japonicum (strain LMG 29417 / CECT 9101 / MAFF 303099)</name>
    <name type="common">Mesorhizobium loti (strain MAFF 303099)</name>
    <dbReference type="NCBI Taxonomy" id="266835"/>
    <lineage>
        <taxon>Bacteria</taxon>
        <taxon>Pseudomonadati</taxon>
        <taxon>Pseudomonadota</taxon>
        <taxon>Alphaproteobacteria</taxon>
        <taxon>Hyphomicrobiales</taxon>
        <taxon>Phyllobacteriaceae</taxon>
        <taxon>Mesorhizobium</taxon>
    </lineage>
</organism>
<name>NODC_RHILO</name>
<reference key="1">
    <citation type="journal article" date="1990" name="Nucleic Acids Res.">
        <title>Nucleotide sequence of Rhizobium loti nodC.</title>
        <authorList>
            <person name="Collins-Emerson J.M."/>
            <person name="Terzaghi E.A."/>
            <person name="Scott D.B."/>
        </authorList>
    </citation>
    <scope>NUCLEOTIDE SEQUENCE [GENOMIC DNA]</scope>
    <source>
        <strain>NZP 2037</strain>
    </source>
</reference>
<reference key="2">
    <citation type="journal article" date="2000" name="DNA Res.">
        <title>Complete genome structure of the nitrogen-fixing symbiotic bacterium Mesorhizobium loti.</title>
        <authorList>
            <person name="Kaneko T."/>
            <person name="Nakamura Y."/>
            <person name="Sato S."/>
            <person name="Asamizu E."/>
            <person name="Kato T."/>
            <person name="Sasamoto S."/>
            <person name="Watanabe A."/>
            <person name="Idesawa K."/>
            <person name="Ishikawa A."/>
            <person name="Kawashima K."/>
            <person name="Kimura T."/>
            <person name="Kishida Y."/>
            <person name="Kiyokawa C."/>
            <person name="Kohara M."/>
            <person name="Matsumoto M."/>
            <person name="Matsuno A."/>
            <person name="Mochizuki Y."/>
            <person name="Nakayama S."/>
            <person name="Nakazaki N."/>
            <person name="Shimpo S."/>
            <person name="Sugimoto M."/>
            <person name="Takeuchi C."/>
            <person name="Yamada M."/>
            <person name="Tabata S."/>
        </authorList>
    </citation>
    <scope>NUCLEOTIDE SEQUENCE [LARGE SCALE GENOMIC DNA]</scope>
    <source>
        <strain>LMG 29417 / CECT 9101 / MAFF 303099</strain>
    </source>
</reference>
<reference key="3">
    <citation type="journal article" date="1996" name="Mol. Plant Microbe Interact.">
        <title>Novel and complex chromosomal arrangement of Rhizobium loti nodulation genes.</title>
        <authorList>
            <person name="Scott D.B."/>
            <person name="Young C.A."/>
            <person name="Collins-Emerson J.M."/>
            <person name="Terzaghi E.A."/>
            <person name="Rockman E.S."/>
            <person name="Lewis P.E."/>
            <person name="Pankhurst C.E."/>
        </authorList>
    </citation>
    <scope>NUCLEOTIDE SEQUENCE [GENOMIC DNA] OF 1-35</scope>
    <source>
        <strain>NZP 2213</strain>
    </source>
</reference>
<comment type="function">
    <text>Involved in the synthesis of Nod factor, a sulfated N-acyl-beta-1,4-tetrasaccharide of N-acetylglucosamine which initiates a series of events in the host plant species leading eventually to nodulation.</text>
</comment>
<comment type="subcellular location">
    <subcellularLocation>
        <location evidence="1">Cell membrane</location>
        <topology evidence="1">Peripheral membrane protein</topology>
    </subcellularLocation>
</comment>
<comment type="similarity">
    <text evidence="1">Belongs to the NodC/HAS family.</text>
</comment>
<accession>P17862</accession>
<accession>Q52841</accession>
<gene>
    <name type="primary">nodC</name>
    <name type="ordered locus">mlr6163</name>
</gene>
<dbReference type="EC" id="2.4.1.-"/>
<dbReference type="EMBL" id="X52958">
    <property type="protein sequence ID" value="CAA37131.1"/>
    <property type="molecule type" value="Genomic_DNA"/>
</dbReference>
<dbReference type="EMBL" id="BA000012">
    <property type="protein sequence ID" value="BAB52500.1"/>
    <property type="molecule type" value="Genomic_DNA"/>
</dbReference>
<dbReference type="EMBL" id="L06241">
    <property type="protein sequence ID" value="AAB47353.1"/>
    <property type="molecule type" value="Genomic_DNA"/>
</dbReference>
<dbReference type="PIR" id="S12793">
    <property type="entry name" value="S12793"/>
</dbReference>
<dbReference type="RefSeq" id="WP_010913821.1">
    <property type="nucleotide sequence ID" value="NC_002678.2"/>
</dbReference>
<dbReference type="SMR" id="P17862"/>
<dbReference type="CAZy" id="GT2">
    <property type="family name" value="Glycosyltransferase Family 2"/>
</dbReference>
<dbReference type="KEGG" id="mlo:mlr6163"/>
<dbReference type="eggNOG" id="COG1215">
    <property type="taxonomic scope" value="Bacteria"/>
</dbReference>
<dbReference type="HOGENOM" id="CLU_029695_4_2_5"/>
<dbReference type="Proteomes" id="UP000000552">
    <property type="component" value="Chromosome"/>
</dbReference>
<dbReference type="GO" id="GO:0005886">
    <property type="term" value="C:plasma membrane"/>
    <property type="evidence" value="ECO:0007669"/>
    <property type="project" value="UniProtKB-SubCell"/>
</dbReference>
<dbReference type="GO" id="GO:0050501">
    <property type="term" value="F:hyaluronan synthase activity"/>
    <property type="evidence" value="ECO:0007669"/>
    <property type="project" value="TreeGrafter"/>
</dbReference>
<dbReference type="GO" id="GO:0085029">
    <property type="term" value="P:extracellular matrix assembly"/>
    <property type="evidence" value="ECO:0007669"/>
    <property type="project" value="TreeGrafter"/>
</dbReference>
<dbReference type="GO" id="GO:0030213">
    <property type="term" value="P:hyaluronan biosynthetic process"/>
    <property type="evidence" value="ECO:0007669"/>
    <property type="project" value="TreeGrafter"/>
</dbReference>
<dbReference type="CDD" id="cd06423">
    <property type="entry name" value="CESA_like"/>
    <property type="match status" value="1"/>
</dbReference>
<dbReference type="Gene3D" id="3.90.550.10">
    <property type="entry name" value="Spore Coat Polysaccharide Biosynthesis Protein SpsA, Chain A"/>
    <property type="match status" value="1"/>
</dbReference>
<dbReference type="InterPro" id="IPR026463">
    <property type="entry name" value="Chitooligosach_Synthase_NodC"/>
</dbReference>
<dbReference type="InterPro" id="IPR001173">
    <property type="entry name" value="Glyco_trans_2-like"/>
</dbReference>
<dbReference type="InterPro" id="IPR029044">
    <property type="entry name" value="Nucleotide-diphossugar_trans"/>
</dbReference>
<dbReference type="NCBIfam" id="TIGR04242">
    <property type="entry name" value="nodulat_NodC"/>
    <property type="match status" value="1"/>
</dbReference>
<dbReference type="PANTHER" id="PTHR22913">
    <property type="entry name" value="HYALURONAN SYNTHASE"/>
    <property type="match status" value="1"/>
</dbReference>
<dbReference type="PANTHER" id="PTHR22913:SF12">
    <property type="entry name" value="MANNURONAN SYNTHASE"/>
    <property type="match status" value="1"/>
</dbReference>
<dbReference type="Pfam" id="PF00535">
    <property type="entry name" value="Glycos_transf_2"/>
    <property type="match status" value="1"/>
</dbReference>
<dbReference type="SUPFAM" id="SSF53448">
    <property type="entry name" value="Nucleotide-diphospho-sugar transferases"/>
    <property type="match status" value="1"/>
</dbReference>
<proteinExistence type="inferred from homology"/>
<sequence>MNLFASASTVAICSYALLSTVYKTAQVFYTLPTNVPPTSGDPPSGEPWPSVDVIIPCYNEAPRTLSDCLASIASQDYAGKLQVYVVDDGSANRDALVGVHEEYAGDPRFNFVALPKNVGKRKAQIAAIRRSCGDLVLNVDSDTILAPDVITRLALKMQDQAVGAAMGQLAASNRSETWLTRLIDMEYWLACNEERAAQARFGAVMCCCGPCAMYRRSALVSLLDQYETQRFRGKPSDFGEDRHLTILMLKAGFRTEYVPEAVAATVVPNSMGPYLRQQLRWARSTFRDTLLAFQLLRGLNIYLTLDVIGQNIGPLLLSLSILAGLAQFVTTGTVPWTACLMIAAMTIVRCSVAAFRARQLRFLGFSLHTLINIFLLLPLKAYALCTLSNSDWLSRSSAANVQDTGDALPKPNLVGSDAAYSEQQ</sequence>
<keyword id="KW-1003">Cell membrane</keyword>
<keyword id="KW-0328">Glycosyltransferase</keyword>
<keyword id="KW-0472">Membrane</keyword>
<keyword id="KW-0536">Nodulation</keyword>
<keyword id="KW-0808">Transferase</keyword>